<gene>
    <name evidence="1" type="primary">pgl</name>
    <name type="ordered locus">EcE24377A_0794</name>
</gene>
<comment type="function">
    <text evidence="1">Catalyzes the hydrolysis of 6-phosphogluconolactone to 6-phosphogluconate.</text>
</comment>
<comment type="catalytic activity">
    <reaction evidence="1">
        <text>6-phospho-D-glucono-1,5-lactone + H2O = 6-phospho-D-gluconate + H(+)</text>
        <dbReference type="Rhea" id="RHEA:12556"/>
        <dbReference type="ChEBI" id="CHEBI:15377"/>
        <dbReference type="ChEBI" id="CHEBI:15378"/>
        <dbReference type="ChEBI" id="CHEBI:57955"/>
        <dbReference type="ChEBI" id="CHEBI:58759"/>
        <dbReference type="EC" id="3.1.1.31"/>
    </reaction>
</comment>
<comment type="pathway">
    <text evidence="1">Carbohydrate degradation; pentose phosphate pathway; D-ribulose 5-phosphate from D-glucose 6-phosphate (oxidative stage): step 2/3.</text>
</comment>
<comment type="similarity">
    <text evidence="1">Belongs to the cycloisomerase 2 family.</text>
</comment>
<organism>
    <name type="scientific">Escherichia coli O139:H28 (strain E24377A / ETEC)</name>
    <dbReference type="NCBI Taxonomy" id="331111"/>
    <lineage>
        <taxon>Bacteria</taxon>
        <taxon>Pseudomonadati</taxon>
        <taxon>Pseudomonadota</taxon>
        <taxon>Gammaproteobacteria</taxon>
        <taxon>Enterobacterales</taxon>
        <taxon>Enterobacteriaceae</taxon>
        <taxon>Escherichia</taxon>
    </lineage>
</organism>
<evidence type="ECO:0000255" key="1">
    <source>
        <dbReference type="HAMAP-Rule" id="MF_01605"/>
    </source>
</evidence>
<feature type="chain" id="PRO_1000069408" description="6-phosphogluconolactonase">
    <location>
        <begin position="1"/>
        <end position="331"/>
    </location>
</feature>
<feature type="modified residue" description="N6-acetyllysine" evidence="1">
    <location>
        <position position="287"/>
    </location>
</feature>
<sequence>MKQTVYIASPESQQIHVWNLNHEGALTLTQVVDVPGQVQPMVVSPDKRYLYVGVRPEFRVLAYRIAPDDGALTFAAESALPGSPTHISTDHQGQFVFVGSYNAGNVSVTRLEDGLPVGVVDVVEGLDGCHSANISPDNRTLWVPALKQDRICLFTVSDDGHLVAQDPAEVTTVEGAGPRHMVFHPNEQYAYCVNELNSSVDVWELKDPHGNIECVQTLDMMPENFSDTRWAADIHITPDGRHLYACDRTASLITVFSVSEDGSVLSKEGFQPTETQPRGFNVDHSGKYLIAAGQKSHHISVYEIVGEQGLLHEKGRYAVGQGPMWVVVNAH</sequence>
<proteinExistence type="inferred from homology"/>
<protein>
    <recommendedName>
        <fullName evidence="1">6-phosphogluconolactonase</fullName>
        <shortName evidence="1">6-P-gluconolactonase</shortName>
        <ecNumber evidence="1">3.1.1.31</ecNumber>
    </recommendedName>
</protein>
<reference key="1">
    <citation type="journal article" date="2008" name="J. Bacteriol.">
        <title>The pangenome structure of Escherichia coli: comparative genomic analysis of E. coli commensal and pathogenic isolates.</title>
        <authorList>
            <person name="Rasko D.A."/>
            <person name="Rosovitz M.J."/>
            <person name="Myers G.S.A."/>
            <person name="Mongodin E.F."/>
            <person name="Fricke W.F."/>
            <person name="Gajer P."/>
            <person name="Crabtree J."/>
            <person name="Sebaihia M."/>
            <person name="Thomson N.R."/>
            <person name="Chaudhuri R."/>
            <person name="Henderson I.R."/>
            <person name="Sperandio V."/>
            <person name="Ravel J."/>
        </authorList>
    </citation>
    <scope>NUCLEOTIDE SEQUENCE [LARGE SCALE GENOMIC DNA]</scope>
    <source>
        <strain>E24377A / ETEC</strain>
    </source>
</reference>
<dbReference type="EC" id="3.1.1.31" evidence="1"/>
<dbReference type="EMBL" id="CP000800">
    <property type="protein sequence ID" value="ABV17414.1"/>
    <property type="molecule type" value="Genomic_DNA"/>
</dbReference>
<dbReference type="RefSeq" id="WP_000815435.1">
    <property type="nucleotide sequence ID" value="NC_009801.1"/>
</dbReference>
<dbReference type="SMR" id="A7ZJE2"/>
<dbReference type="GeneID" id="86945650"/>
<dbReference type="KEGG" id="ecw:EcE24377A_0794"/>
<dbReference type="HOGENOM" id="CLU_038716_2_0_6"/>
<dbReference type="UniPathway" id="UPA00115">
    <property type="reaction ID" value="UER00409"/>
</dbReference>
<dbReference type="Proteomes" id="UP000001122">
    <property type="component" value="Chromosome"/>
</dbReference>
<dbReference type="GO" id="GO:0005829">
    <property type="term" value="C:cytosol"/>
    <property type="evidence" value="ECO:0007669"/>
    <property type="project" value="TreeGrafter"/>
</dbReference>
<dbReference type="GO" id="GO:0017057">
    <property type="term" value="F:6-phosphogluconolactonase activity"/>
    <property type="evidence" value="ECO:0007669"/>
    <property type="project" value="UniProtKB-UniRule"/>
</dbReference>
<dbReference type="GO" id="GO:0006006">
    <property type="term" value="P:glucose metabolic process"/>
    <property type="evidence" value="ECO:0007669"/>
    <property type="project" value="UniProtKB-KW"/>
</dbReference>
<dbReference type="GO" id="GO:0009051">
    <property type="term" value="P:pentose-phosphate shunt, oxidative branch"/>
    <property type="evidence" value="ECO:0007669"/>
    <property type="project" value="UniProtKB-UniRule"/>
</dbReference>
<dbReference type="FunFam" id="2.130.10.10:FF:000051">
    <property type="entry name" value="6-phosphogluconolactonase"/>
    <property type="match status" value="1"/>
</dbReference>
<dbReference type="Gene3D" id="2.130.10.10">
    <property type="entry name" value="YVTN repeat-like/Quinoprotein amine dehydrogenase"/>
    <property type="match status" value="1"/>
</dbReference>
<dbReference type="HAMAP" id="MF_01605">
    <property type="entry name" value="6P_gluconolactonase"/>
    <property type="match status" value="1"/>
</dbReference>
<dbReference type="InterPro" id="IPR022528">
    <property type="entry name" value="6-phosphogluconolactonase_YbhE"/>
</dbReference>
<dbReference type="InterPro" id="IPR050282">
    <property type="entry name" value="Cycloisomerase_2"/>
</dbReference>
<dbReference type="InterPro" id="IPR019405">
    <property type="entry name" value="Lactonase_7-beta_prop"/>
</dbReference>
<dbReference type="InterPro" id="IPR011045">
    <property type="entry name" value="N2O_reductase_N"/>
</dbReference>
<dbReference type="InterPro" id="IPR015943">
    <property type="entry name" value="WD40/YVTN_repeat-like_dom_sf"/>
</dbReference>
<dbReference type="NCBIfam" id="NF008258">
    <property type="entry name" value="PRK11028.1"/>
    <property type="match status" value="1"/>
</dbReference>
<dbReference type="PANTHER" id="PTHR30344:SF1">
    <property type="entry name" value="6-PHOSPHOGLUCONOLACTONASE"/>
    <property type="match status" value="1"/>
</dbReference>
<dbReference type="PANTHER" id="PTHR30344">
    <property type="entry name" value="6-PHOSPHOGLUCONOLACTONASE-RELATED"/>
    <property type="match status" value="1"/>
</dbReference>
<dbReference type="Pfam" id="PF10282">
    <property type="entry name" value="Lactonase"/>
    <property type="match status" value="1"/>
</dbReference>
<dbReference type="SUPFAM" id="SSF50974">
    <property type="entry name" value="Nitrous oxide reductase, N-terminal domain"/>
    <property type="match status" value="1"/>
</dbReference>
<name>6PGL_ECO24</name>
<accession>A7ZJE2</accession>
<keyword id="KW-0007">Acetylation</keyword>
<keyword id="KW-0119">Carbohydrate metabolism</keyword>
<keyword id="KW-0313">Glucose metabolism</keyword>
<keyword id="KW-0378">Hydrolase</keyword>
<keyword id="KW-1185">Reference proteome</keyword>